<gene>
    <name evidence="8" type="primary">YOR1</name>
    <name evidence="10" type="ORF">CNAG_03503</name>
</gene>
<dbReference type="EC" id="7.2.2.-" evidence="1"/>
<dbReference type="EMBL" id="CP003827">
    <property type="protein sequence ID" value="AFR96727.1"/>
    <property type="molecule type" value="Genomic_DNA"/>
</dbReference>
<dbReference type="EMBL" id="CP003827">
    <property type="protein sequence ID" value="AGV14568.1"/>
    <property type="molecule type" value="Genomic_DNA"/>
</dbReference>
<dbReference type="RefSeq" id="XP_012051301.1">
    <property type="nucleotide sequence ID" value="XM_012195911.1"/>
</dbReference>
<dbReference type="RefSeq" id="XP_012051302.1">
    <property type="nucleotide sequence ID" value="XM_012195912.1"/>
</dbReference>
<dbReference type="SMR" id="J9VQH1"/>
<dbReference type="GeneID" id="23887002"/>
<dbReference type="KEGG" id="cng:CNAG_03503"/>
<dbReference type="VEuPathDB" id="FungiDB:CNAG_03503"/>
<dbReference type="HOGENOM" id="CLU_000604_27_3_1"/>
<dbReference type="OrthoDB" id="5779at5206"/>
<dbReference type="Proteomes" id="UP000010091">
    <property type="component" value="Chromosome 8"/>
</dbReference>
<dbReference type="GO" id="GO:0005576">
    <property type="term" value="C:extracellular region"/>
    <property type="evidence" value="ECO:0000314"/>
    <property type="project" value="UniProtKB"/>
</dbReference>
<dbReference type="GO" id="GO:1903561">
    <property type="term" value="C:extracellular vesicle"/>
    <property type="evidence" value="ECO:0007005"/>
    <property type="project" value="UniProtKB"/>
</dbReference>
<dbReference type="GO" id="GO:0016020">
    <property type="term" value="C:membrane"/>
    <property type="evidence" value="ECO:0007669"/>
    <property type="project" value="UniProtKB-KW"/>
</dbReference>
<dbReference type="GO" id="GO:0140359">
    <property type="term" value="F:ABC-type transporter activity"/>
    <property type="evidence" value="ECO:0007669"/>
    <property type="project" value="InterPro"/>
</dbReference>
<dbReference type="GO" id="GO:0005524">
    <property type="term" value="F:ATP binding"/>
    <property type="evidence" value="ECO:0007669"/>
    <property type="project" value="UniProtKB-KW"/>
</dbReference>
<dbReference type="GO" id="GO:0016887">
    <property type="term" value="F:ATP hydrolysis activity"/>
    <property type="evidence" value="ECO:0007669"/>
    <property type="project" value="InterPro"/>
</dbReference>
<dbReference type="GO" id="GO:0051701">
    <property type="term" value="P:biological process involved in interaction with host"/>
    <property type="evidence" value="ECO:0000315"/>
    <property type="project" value="UniProtKB"/>
</dbReference>
<dbReference type="CDD" id="cd18597">
    <property type="entry name" value="ABC_6TM_YOR1_D1_like"/>
    <property type="match status" value="1"/>
</dbReference>
<dbReference type="CDD" id="cd18606">
    <property type="entry name" value="ABC_6TM_YOR1_D2_like"/>
    <property type="match status" value="1"/>
</dbReference>
<dbReference type="CDD" id="cd03250">
    <property type="entry name" value="ABCC_MRP_domain1"/>
    <property type="match status" value="1"/>
</dbReference>
<dbReference type="CDD" id="cd03244">
    <property type="entry name" value="ABCC_MRP_domain2"/>
    <property type="match status" value="1"/>
</dbReference>
<dbReference type="FunFam" id="3.40.50.300:FF:000565">
    <property type="entry name" value="ABC bile acid transporter"/>
    <property type="match status" value="1"/>
</dbReference>
<dbReference type="FunFam" id="1.20.1560.10:FF:000061">
    <property type="entry name" value="ATP-binding cassette transporter YOR1"/>
    <property type="match status" value="1"/>
</dbReference>
<dbReference type="FunFam" id="1.20.1560.10:FF:000010">
    <property type="entry name" value="Multidrug resistance-associated ABC transporter"/>
    <property type="match status" value="1"/>
</dbReference>
<dbReference type="FunFam" id="3.40.50.300:FF:000997">
    <property type="entry name" value="Multidrug resistance-associated protein 1"/>
    <property type="match status" value="1"/>
</dbReference>
<dbReference type="Gene3D" id="1.20.1560.10">
    <property type="entry name" value="ABC transporter type 1, transmembrane domain"/>
    <property type="match status" value="2"/>
</dbReference>
<dbReference type="Gene3D" id="3.40.50.300">
    <property type="entry name" value="P-loop containing nucleotide triphosphate hydrolases"/>
    <property type="match status" value="2"/>
</dbReference>
<dbReference type="InterPro" id="IPR003593">
    <property type="entry name" value="AAA+_ATPase"/>
</dbReference>
<dbReference type="InterPro" id="IPR011527">
    <property type="entry name" value="ABC1_TM_dom"/>
</dbReference>
<dbReference type="InterPro" id="IPR036640">
    <property type="entry name" value="ABC1_TM_sf"/>
</dbReference>
<dbReference type="InterPro" id="IPR003439">
    <property type="entry name" value="ABC_transporter-like_ATP-bd"/>
</dbReference>
<dbReference type="InterPro" id="IPR017871">
    <property type="entry name" value="ABC_transporter-like_CS"/>
</dbReference>
<dbReference type="InterPro" id="IPR050173">
    <property type="entry name" value="ABC_transporter_C-like"/>
</dbReference>
<dbReference type="InterPro" id="IPR027417">
    <property type="entry name" value="P-loop_NTPase"/>
</dbReference>
<dbReference type="PANTHER" id="PTHR24223">
    <property type="entry name" value="ATP-BINDING CASSETTE SUB-FAMILY C"/>
    <property type="match status" value="1"/>
</dbReference>
<dbReference type="PANTHER" id="PTHR24223:SF456">
    <property type="entry name" value="MULTIDRUG RESISTANCE-ASSOCIATED PROTEIN LETHAL(2)03659"/>
    <property type="match status" value="1"/>
</dbReference>
<dbReference type="Pfam" id="PF00664">
    <property type="entry name" value="ABC_membrane"/>
    <property type="match status" value="2"/>
</dbReference>
<dbReference type="Pfam" id="PF00005">
    <property type="entry name" value="ABC_tran"/>
    <property type="match status" value="2"/>
</dbReference>
<dbReference type="SMART" id="SM00382">
    <property type="entry name" value="AAA"/>
    <property type="match status" value="2"/>
</dbReference>
<dbReference type="SUPFAM" id="SSF90123">
    <property type="entry name" value="ABC transporter transmembrane region"/>
    <property type="match status" value="2"/>
</dbReference>
<dbReference type="SUPFAM" id="SSF52540">
    <property type="entry name" value="P-loop containing nucleoside triphosphate hydrolases"/>
    <property type="match status" value="2"/>
</dbReference>
<dbReference type="PROSITE" id="PS50929">
    <property type="entry name" value="ABC_TM1F"/>
    <property type="match status" value="2"/>
</dbReference>
<dbReference type="PROSITE" id="PS00211">
    <property type="entry name" value="ABC_TRANSPORTER_1"/>
    <property type="match status" value="2"/>
</dbReference>
<dbReference type="PROSITE" id="PS50893">
    <property type="entry name" value="ABC_TRANSPORTER_2"/>
    <property type="match status" value="2"/>
</dbReference>
<organism evidence="11">
    <name type="scientific">Cryptococcus neoformans var. grubii serotype A (strain H99 / ATCC 208821 / CBS 10515 / FGSC 9487)</name>
    <name type="common">Filobasidiella neoformans var. grubii</name>
    <dbReference type="NCBI Taxonomy" id="235443"/>
    <lineage>
        <taxon>Eukaryota</taxon>
        <taxon>Fungi</taxon>
        <taxon>Dikarya</taxon>
        <taxon>Basidiomycota</taxon>
        <taxon>Agaricomycotina</taxon>
        <taxon>Tremellomycetes</taxon>
        <taxon>Tremellales</taxon>
        <taxon>Cryptococcaceae</taxon>
        <taxon>Cryptococcus</taxon>
        <taxon>Cryptococcus neoformans species complex</taxon>
    </lineage>
</organism>
<protein>
    <recommendedName>
        <fullName evidence="1">ATP-dependent permease YOR1</fullName>
        <ecNumber evidence="1">7.2.2.-</ecNumber>
    </recommendedName>
    <alternativeName>
        <fullName evidence="1">ABC transporter YOR1</fullName>
    </alternativeName>
</protein>
<keyword id="KW-0067">ATP-binding</keyword>
<keyword id="KW-0472">Membrane</keyword>
<keyword id="KW-0547">Nucleotide-binding</keyword>
<keyword id="KW-0964">Secreted</keyword>
<keyword id="KW-1278">Translocase</keyword>
<keyword id="KW-0812">Transmembrane</keyword>
<keyword id="KW-1133">Transmembrane helix</keyword>
<keyword id="KW-0813">Transport</keyword>
<keyword id="KW-0843">Virulence</keyword>
<proteinExistence type="inferred from homology"/>
<name>YOR1_CRYNH</name>
<evidence type="ECO:0000250" key="1">
    <source>
        <dbReference type="UniProtKB" id="P53049"/>
    </source>
</evidence>
<evidence type="ECO:0000255" key="2"/>
<evidence type="ECO:0000255" key="3">
    <source>
        <dbReference type="PROSITE-ProRule" id="PRU00434"/>
    </source>
</evidence>
<evidence type="ECO:0000255" key="4">
    <source>
        <dbReference type="PROSITE-ProRule" id="PRU00441"/>
    </source>
</evidence>
<evidence type="ECO:0000256" key="5">
    <source>
        <dbReference type="SAM" id="MobiDB-lite"/>
    </source>
</evidence>
<evidence type="ECO:0000269" key="6">
    <source>
    </source>
</evidence>
<evidence type="ECO:0000269" key="7">
    <source>
    </source>
</evidence>
<evidence type="ECO:0000303" key="8">
    <source>
    </source>
</evidence>
<evidence type="ECO:0000305" key="9"/>
<evidence type="ECO:0000312" key="10">
    <source>
        <dbReference type="EMBL" id="AFR96727.1"/>
    </source>
</evidence>
<evidence type="ECO:0000312" key="11">
    <source>
        <dbReference type="Proteomes" id="UP000010091"/>
    </source>
</evidence>
<comment type="function">
    <text evidence="1 7">Transmembrane transporter (By similarity). May play a role in the packaging or formation of extracellular vesicles (EVs), and in the export of virulence factors from EVs (PubMed:36247839). Required for efficient non-lytic exocytosis from host macrophages, the process by which the yeast escapes host macrophages with both host cell and pathogen remaining viable (PubMed:36247839).</text>
</comment>
<comment type="subcellular location">
    <subcellularLocation>
        <location evidence="6">Extracellular vesicle membrane</location>
        <topology evidence="2">Multi-pass membrane protein</topology>
    </subcellularLocation>
    <subcellularLocation>
        <location evidence="7">Secreted</location>
    </subcellularLocation>
</comment>
<comment type="disruption phenotype">
    <text evidence="6 7">Abnormal extracellular vesicle size (PubMed:36247839). Decreases the rate of non-lytic exocytosis in macrophages (PubMed:36247839). Decreases melanin secretion (PubMed:34377375). Decreases virulence in a wax moth model of infection (PubMed:34377375).</text>
</comment>
<comment type="similarity">
    <text evidence="9">Belongs to the ABC transporter superfamily. ABCC family. Conjugate transporter (TC 3.A.1.208) subfamily.</text>
</comment>
<reference evidence="11" key="1">
    <citation type="journal article" date="2014" name="PLoS Genet.">
        <title>Analysis of the genome and transcriptome of Cryptococcus neoformans var. grubii reveals complex RNA expression and microevolution leading to virulence attenuation.</title>
        <authorList>
            <person name="Janbon G."/>
            <person name="Ormerod K.L."/>
            <person name="Paulet D."/>
            <person name="Byrnes E.J. III"/>
            <person name="Yadav V."/>
            <person name="Chatterjee G."/>
            <person name="Mullapudi N."/>
            <person name="Hon C.-C."/>
            <person name="Billmyre R.B."/>
            <person name="Brunel F."/>
            <person name="Bahn Y.-S."/>
            <person name="Chen W."/>
            <person name="Chen Y."/>
            <person name="Chow E.W.L."/>
            <person name="Coppee J.-Y."/>
            <person name="Floyd-Averette A."/>
            <person name="Gaillardin C."/>
            <person name="Gerik K.J."/>
            <person name="Goldberg J."/>
            <person name="Gonzalez-Hilarion S."/>
            <person name="Gujja S."/>
            <person name="Hamlin J.L."/>
            <person name="Hsueh Y.-P."/>
            <person name="Ianiri G."/>
            <person name="Jones S."/>
            <person name="Kodira C.D."/>
            <person name="Kozubowski L."/>
            <person name="Lam W."/>
            <person name="Marra M."/>
            <person name="Mesner L.D."/>
            <person name="Mieczkowski P.A."/>
            <person name="Moyrand F."/>
            <person name="Nielsen K."/>
            <person name="Proux C."/>
            <person name="Rossignol T."/>
            <person name="Schein J.E."/>
            <person name="Sun S."/>
            <person name="Wollschlaeger C."/>
            <person name="Wood I.A."/>
            <person name="Zeng Q."/>
            <person name="Neuveglise C."/>
            <person name="Newlon C.S."/>
            <person name="Perfect J.R."/>
            <person name="Lodge J.K."/>
            <person name="Idnurm A."/>
            <person name="Stajich J.E."/>
            <person name="Kronstad J.W."/>
            <person name="Sanyal K."/>
            <person name="Heitman J."/>
            <person name="Fraser J.A."/>
            <person name="Cuomo C.A."/>
            <person name="Dietrich F.S."/>
        </authorList>
    </citation>
    <scope>NUCLEOTIDE SEQUENCE [LARGE SCALE GENOMIC DNA]</scope>
    <source>
        <strain>H99 / ATCC 208821 / CBS 10515 / FGSC 9487</strain>
    </source>
</reference>
<reference evidence="9" key="2">
    <citation type="journal article" date="2021" name="J. Extracell. Vesicles">
        <title>Cryptococcus extracellular vesicles properties and their use as vaccine platforms.</title>
        <authorList>
            <person name="Rizzo J."/>
            <person name="Wong S.S.W."/>
            <person name="Gazi A.D."/>
            <person name="Moyrand F."/>
            <person name="Chaze T."/>
            <person name="Commere P.H."/>
            <person name="Novault S."/>
            <person name="Matondo M."/>
            <person name="Pehau-Arnaudet G."/>
            <person name="Reis F.C.G."/>
            <person name="Vos M."/>
            <person name="Alves L.R."/>
            <person name="May R.C."/>
            <person name="Nimrichter L."/>
            <person name="Rodrigues M.L."/>
            <person name="Aimanianda V."/>
            <person name="Janbon G."/>
        </authorList>
    </citation>
    <scope>SUBCELLULAR LOCATION [LARGE SCALE ANALYSIS]</scope>
    <scope>DISRUPTION PHENOTYPE</scope>
</reference>
<reference evidence="9" key="3">
    <citation type="journal article" date="2022" name="MicroLife">
        <title>Cryptococcus neoformans releases proteins during intracellular residence that affect the outcome of the fungal-macrophage interaction.</title>
        <authorList>
            <person name="Jung E.H."/>
            <person name="Park Y.D."/>
            <person name="Dragotakes Q."/>
            <person name="Ramirez L.S."/>
            <person name="Smith D.Q."/>
            <person name="Reis F.C.G."/>
            <person name="Dziedzic A."/>
            <person name="Rodrigues M.L."/>
            <person name="Baker R.P."/>
            <person name="Williamson P.R."/>
            <person name="Jedlicka A."/>
            <person name="Casadevall A."/>
            <person name="Coelho C."/>
        </authorList>
    </citation>
    <scope>FUNCTION</scope>
    <scope>SUBCELLULAR LOCATION</scope>
    <scope>DISRUPTION PHENOTYPE</scope>
</reference>
<accession>J9VQH1</accession>
<sequence length="1512" mass="167174">MSPLLPTHWGASAPQNEPTLPSPSHSVSTRVGDEEKLRRSEGSDGEDRINLDSNKYDVKGMKETEDGGANKQVMVVFEQKSGKELEKPIEEGPFTQPRWRHSLPFVKPKHPPPPPPLSLDDAPVTPEVSANFFNLLFFNWISPMMALGSARPLQDADLWRMDAARGAKPLSEKLLASYAARTKKANEYNARLADPNTPLPFSRRILYSVLPHREQREKDYRKKHGKKHASLAMSLLDVFGWFFMSAGFIKVFGDTCQAVTPLVIRRLINWSANYQAAKSAGLDLPSRGPGIGAAIGLLLLLICSSLGMHHYFIRSMGTGVLSRAAIISAVYQQALQFTQKSRGQIPNGKLVNHISTDTSRIDFAAGFSHMLWTAPVQMIVIIIILIVQIGYSALPGIAFLLVMTPLQARFMKTLFMFRKKAATWTDKRAKLLQEILGGMRIVKYMAWEKPFLERIHAIRSMELKYIRLLLIFRSGMTAIAMSLPILAAILSFITYSLTSHSLEAAKIFTVITLFNLMRMPLMMWPMTLSSTADALNALGRLEAVFDAELVKEEKKVDPSMDVAIRLENASFTWDSAPIEEDNMMSKLTGKYAKVLNGGKPGGPPGKKEKKNKPKKVTAAEEIQAETAAGQPGAGEASAEGQGQKNPSAPGIDEEISEKKEVEIFQLRDINLNIPKGSLTAIVGAIGSGKSSLLQGLMGEMRRTTGSVTFSGSTSLCAQTPWIQNATVRENILFGQPWDEERYWAAIRDSSLEADLELLEDGDGTEIGEKGINLSGGQKQRVNIARAIYYNADIIALDDPLSALDAGVGKAIFFNAIINALSGKTRVLVTHALHLLPYVDNIIMMEDGKIGEVGTYRELKERNGAFAKLIKEFGNEELAEEKMETEEEAVESSGPTVTHDRANMMSKGSAHTLMQTEERNVGALKKGTFFDYLKAGKGVFMLPLLFFCIVVAQSFYVITSFWLVWWEETKWPQPNGFYMGIYAGLGVGLAIALFFQGFSNALINYFASVNIHHNAISRVMLAPQTFFDTTPLGRIMNRFSKDTDTIDNTLSDAMRMAISTLANIVGSVILLAIIEPYFLIAMAVVSLLYLHNAMFYRRSSREFKRIDSILRSSLYSHFSESLSGVATIRSYGETARFFEDNIHRVDIENRAYYLTIVNQRWLGLRLDFLGSLLSFSVAIIVVCSSSVSASNGGLGLSTIVSVQQAFSWLVRQIAEVENDMVGAERIMHYANELEQESPHQIEGTKPPASWPSEGTIEFKDVRMRYRPELPDVLKGLTLNVGASEKIGVVGRTGAGKSSIMVALFRMSELSHGFIKIDGVDVSKVGLNDLRSGISIIPQDPLLFSGTLRSNIDPFNTKTDAELYDTLRRSHLIGSSDSSHNSDSQNRFNLDTVIEEEGGNLSVGERSLVSLARALVRNTKVLVLDEATASVDLETDAKIQETIRQEFRDRTLLCIAHRLKTILAYDRILVMSDGQVAEFDTPENLFLSGGIFTEMCSKANISLADIKAAAALRF</sequence>
<feature type="chain" id="PRO_0000457769" description="ATP-dependent permease YOR1">
    <location>
        <begin position="1"/>
        <end position="1512"/>
    </location>
</feature>
<feature type="transmembrane region" description="Helical" evidence="2">
    <location>
        <begin position="229"/>
        <end position="249"/>
    </location>
</feature>
<feature type="transmembrane region" description="Helical" evidence="2 4">
    <location>
        <begin position="288"/>
        <end position="308"/>
    </location>
</feature>
<feature type="transmembrane region" description="Helical" evidence="2 4">
    <location>
        <begin position="363"/>
        <end position="385"/>
    </location>
</feature>
<feature type="transmembrane region" description="Helical" evidence="2 4">
    <location>
        <begin position="475"/>
        <end position="495"/>
    </location>
</feature>
<feature type="transmembrane region" description="Helical" evidence="2 4">
    <location>
        <begin position="507"/>
        <end position="527"/>
    </location>
</feature>
<feature type="transmembrane region" description="Helical" evidence="2 4">
    <location>
        <begin position="937"/>
        <end position="957"/>
    </location>
</feature>
<feature type="transmembrane region" description="Helical" evidence="2 4">
    <location>
        <begin position="974"/>
        <end position="994"/>
    </location>
</feature>
<feature type="transmembrane region" description="Helical" evidence="2 4">
    <location>
        <begin position="1067"/>
        <end position="1087"/>
    </location>
</feature>
<feature type="transmembrane region" description="Helical" evidence="2 4">
    <location>
        <begin position="1167"/>
        <end position="1187"/>
    </location>
</feature>
<feature type="domain" description="ABC transmembrane type-1 1" evidence="4">
    <location>
        <begin position="246"/>
        <end position="533"/>
    </location>
</feature>
<feature type="domain" description="ABC transporter 1" evidence="3">
    <location>
        <begin position="651"/>
        <end position="871"/>
    </location>
</feature>
<feature type="domain" description="ABC transmembrane type-1 2" evidence="4">
    <location>
        <begin position="943"/>
        <end position="1217"/>
    </location>
</feature>
<feature type="domain" description="ABC transporter 2" evidence="3">
    <location>
        <begin position="1255"/>
        <end position="1496"/>
    </location>
</feature>
<feature type="region of interest" description="Disordered" evidence="5">
    <location>
        <begin position="1"/>
        <end position="68"/>
    </location>
</feature>
<feature type="region of interest" description="Disordered" evidence="5">
    <location>
        <begin position="594"/>
        <end position="656"/>
    </location>
</feature>
<feature type="compositionally biased region" description="Polar residues" evidence="5">
    <location>
        <begin position="13"/>
        <end position="29"/>
    </location>
</feature>
<feature type="compositionally biased region" description="Basic and acidic residues" evidence="5">
    <location>
        <begin position="31"/>
        <end position="65"/>
    </location>
</feature>
<feature type="compositionally biased region" description="Low complexity" evidence="5">
    <location>
        <begin position="619"/>
        <end position="643"/>
    </location>
</feature>
<feature type="binding site" evidence="3">
    <location>
        <begin position="683"/>
        <end position="690"/>
    </location>
    <ligand>
        <name>ATP</name>
        <dbReference type="ChEBI" id="CHEBI:30616"/>
    </ligand>
</feature>
<feature type="binding site" evidence="3">
    <location>
        <begin position="1289"/>
        <end position="1296"/>
    </location>
    <ligand>
        <name>ATP</name>
        <dbReference type="ChEBI" id="CHEBI:30616"/>
    </ligand>
</feature>